<comment type="function">
    <text evidence="1 2">Microtubule inner protein (MIP) part of the dynein-decorated doublet microtubules (DMTs) in cilia axoneme, which is required for motile cilia beating (PubMed:36191189). Binds to the intra-tubulin interfaces (By similarity).</text>
</comment>
<comment type="subunit">
    <text evidence="1">Microtubule inner protein component of sperm flagellar doublet microtubules.</text>
</comment>
<comment type="subcellular location">
    <subcellularLocation>
        <location evidence="2">Cytoplasm</location>
        <location evidence="2">Cytoskeleton</location>
        <location evidence="2">Cilium axoneme</location>
    </subcellularLocation>
    <subcellularLocation>
        <location evidence="1">Cytoplasm</location>
        <location evidence="1">Cytoskeleton</location>
        <location evidence="1">Flagellum axoneme</location>
    </subcellularLocation>
</comment>
<comment type="tissue specificity">
    <text evidence="2">Expressed in airway epithelial cells.</text>
</comment>
<comment type="similarity">
    <text evidence="3">Belongs to the CIMIP2 family.</text>
</comment>
<sequence length="201" mass="23421">MASRSAGTLLTEFNAAYVPPGLMPGYQGHVPTVAFSFGAPYGTTTLKYFQDHRNRAMEKSHTPFSQGGHFPTIFSTNPNLLLMERASTRDRWLHKPSYTRFNLDSHRSTELTNFYQMVQQHRKYYQDKTGTVPRVPYFAMPVREPERYPLPTVLPPLCPKKKWHLLRLAPENLKTYQTFPSGKRVSPQERKKRDCYFEFRA</sequence>
<dbReference type="EMBL" id="AC015977">
    <property type="status" value="NOT_ANNOTATED_CDS"/>
    <property type="molecule type" value="Genomic_DNA"/>
</dbReference>
<dbReference type="EMBL" id="AC108070">
    <property type="status" value="NOT_ANNOTATED_CDS"/>
    <property type="molecule type" value="Genomic_DNA"/>
</dbReference>
<dbReference type="EMBL" id="CH471053">
    <property type="protein sequence ID" value="EAX00681.1"/>
    <property type="molecule type" value="Genomic_DNA"/>
</dbReference>
<dbReference type="CCDS" id="CCDS42661.1"/>
<dbReference type="RefSeq" id="NP_001098989.1">
    <property type="nucleotide sequence ID" value="NM_001105519.3"/>
</dbReference>
<dbReference type="PDB" id="7UNG">
    <property type="method" value="EM"/>
    <property type="resolution" value="3.60 A"/>
    <property type="chains" value="M1/M2/M3/M4=1-201"/>
</dbReference>
<dbReference type="PDB" id="8J07">
    <property type="method" value="EM"/>
    <property type="resolution" value="4.10 A"/>
    <property type="chains" value="7A/7B/7C/7D/7E/7F/7G=1-201"/>
</dbReference>
<dbReference type="PDBsum" id="7UNG"/>
<dbReference type="PDBsum" id="8J07"/>
<dbReference type="EMDB" id="EMD-26624"/>
<dbReference type="EMDB" id="EMD-35888"/>
<dbReference type="SMR" id="A6NJV1"/>
<dbReference type="FunCoup" id="A6NJV1">
    <property type="interactions" value="895"/>
</dbReference>
<dbReference type="STRING" id="9606.ENSP00000332875"/>
<dbReference type="PhosphoSitePlus" id="A6NJV1"/>
<dbReference type="BioMuta" id="C2orf70"/>
<dbReference type="MassIVE" id="A6NJV1"/>
<dbReference type="PaxDb" id="9606-ENSP00000332875"/>
<dbReference type="PeptideAtlas" id="A6NJV1"/>
<dbReference type="ProteomicsDB" id="1357"/>
<dbReference type="Antibodypedia" id="67330">
    <property type="antibodies" value="18 antibodies from 7 providers"/>
</dbReference>
<dbReference type="DNASU" id="339778"/>
<dbReference type="Ensembl" id="ENST00000329615.4">
    <property type="protein sequence ID" value="ENSP00000332875.3"/>
    <property type="gene ID" value="ENSG00000173557.15"/>
</dbReference>
<dbReference type="GeneID" id="339778"/>
<dbReference type="KEGG" id="hsa:339778"/>
<dbReference type="MANE-Select" id="ENST00000329615.4">
    <property type="protein sequence ID" value="ENSP00000332875.3"/>
    <property type="RefSeq nucleotide sequence ID" value="NM_001105519.3"/>
    <property type="RefSeq protein sequence ID" value="NP_001098989.1"/>
</dbReference>
<dbReference type="UCSC" id="uc010eyn.4">
    <property type="organism name" value="human"/>
</dbReference>
<dbReference type="AGR" id="HGNC:27938"/>
<dbReference type="CTD" id="339778"/>
<dbReference type="GeneCards" id="CIMIP2C"/>
<dbReference type="HGNC" id="HGNC:27938">
    <property type="gene designation" value="CIMIP2C"/>
</dbReference>
<dbReference type="HPA" id="ENSG00000173557">
    <property type="expression patterns" value="Tissue enhanced (choroid plexus, fallopian tube, testis)"/>
</dbReference>
<dbReference type="neXtProt" id="NX_A6NJV1"/>
<dbReference type="OpenTargets" id="ENSG00000173557"/>
<dbReference type="VEuPathDB" id="HostDB:ENSG00000173557"/>
<dbReference type="eggNOG" id="ENOG502S0NQ">
    <property type="taxonomic scope" value="Eukaryota"/>
</dbReference>
<dbReference type="GeneTree" id="ENSGT00390000018634"/>
<dbReference type="HOGENOM" id="CLU_118165_0_0_1"/>
<dbReference type="InParanoid" id="A6NJV1"/>
<dbReference type="OMA" id="RQKRDCY"/>
<dbReference type="OrthoDB" id="8181742at2759"/>
<dbReference type="PAN-GO" id="A6NJV1">
    <property type="GO annotations" value="0 GO annotations based on evolutionary models"/>
</dbReference>
<dbReference type="PhylomeDB" id="A6NJV1"/>
<dbReference type="TreeFam" id="TF329317"/>
<dbReference type="PathwayCommons" id="A6NJV1"/>
<dbReference type="SignaLink" id="A6NJV1"/>
<dbReference type="BioGRID-ORCS" id="339778">
    <property type="hits" value="7 hits in 1107 CRISPR screens"/>
</dbReference>
<dbReference type="GenomeRNAi" id="339778"/>
<dbReference type="Pharos" id="A6NJV1">
    <property type="development level" value="Tdark"/>
</dbReference>
<dbReference type="PRO" id="PR:A6NJV1"/>
<dbReference type="Proteomes" id="UP000005640">
    <property type="component" value="Chromosome 2"/>
</dbReference>
<dbReference type="RNAct" id="A6NJV1">
    <property type="molecule type" value="protein"/>
</dbReference>
<dbReference type="Bgee" id="ENSG00000173557">
    <property type="expression patterns" value="Expressed in male germ line stem cell (sensu Vertebrata) in testis and 95 other cell types or tissues"/>
</dbReference>
<dbReference type="ExpressionAtlas" id="A6NJV1">
    <property type="expression patterns" value="baseline and differential"/>
</dbReference>
<dbReference type="GO" id="GO:0160111">
    <property type="term" value="C:axonemal A tubule inner sheath"/>
    <property type="evidence" value="ECO:0000250"/>
    <property type="project" value="UniProtKB"/>
</dbReference>
<dbReference type="GO" id="GO:0005879">
    <property type="term" value="C:axonemal microtubule"/>
    <property type="evidence" value="ECO:0000314"/>
    <property type="project" value="UniProtKB"/>
</dbReference>
<dbReference type="GO" id="GO:0005634">
    <property type="term" value="C:nucleus"/>
    <property type="evidence" value="ECO:0007005"/>
    <property type="project" value="UniProtKB"/>
</dbReference>
<dbReference type="GO" id="GO:0036126">
    <property type="term" value="C:sperm flagellum"/>
    <property type="evidence" value="ECO:0000250"/>
    <property type="project" value="UniProtKB"/>
</dbReference>
<dbReference type="GO" id="GO:0030317">
    <property type="term" value="P:flagellated sperm motility"/>
    <property type="evidence" value="ECO:0000250"/>
    <property type="project" value="UniProtKB"/>
</dbReference>
<dbReference type="InterPro" id="IPR052329">
    <property type="entry name" value="CIMIP2C"/>
</dbReference>
<dbReference type="InterPro" id="IPR018902">
    <property type="entry name" value="CMI2A-C-like_dom"/>
</dbReference>
<dbReference type="PANTHER" id="PTHR34924:SF1">
    <property type="entry name" value="PROTEIN FAM166C"/>
    <property type="match status" value="1"/>
</dbReference>
<dbReference type="PANTHER" id="PTHR34924">
    <property type="entry name" value="UPF0573 PROTEIN C2ORF70"/>
    <property type="match status" value="1"/>
</dbReference>
<dbReference type="Pfam" id="PF10629">
    <property type="entry name" value="CMI2B-like"/>
    <property type="match status" value="1"/>
</dbReference>
<protein>
    <recommendedName>
        <fullName evidence="3">Ciliary microtubule inner protein 2C</fullName>
    </recommendedName>
</protein>
<accession>A6NJV1</accession>
<reference key="1">
    <citation type="journal article" date="2005" name="Nature">
        <title>Generation and annotation of the DNA sequences of human chromosomes 2 and 4.</title>
        <authorList>
            <person name="Hillier L.W."/>
            <person name="Graves T.A."/>
            <person name="Fulton R.S."/>
            <person name="Fulton L.A."/>
            <person name="Pepin K.H."/>
            <person name="Minx P."/>
            <person name="Wagner-McPherson C."/>
            <person name="Layman D."/>
            <person name="Wylie K."/>
            <person name="Sekhon M."/>
            <person name="Becker M.C."/>
            <person name="Fewell G.A."/>
            <person name="Delehaunty K.D."/>
            <person name="Miner T.L."/>
            <person name="Nash W.E."/>
            <person name="Kremitzki C."/>
            <person name="Oddy L."/>
            <person name="Du H."/>
            <person name="Sun H."/>
            <person name="Bradshaw-Cordum H."/>
            <person name="Ali J."/>
            <person name="Carter J."/>
            <person name="Cordes M."/>
            <person name="Harris A."/>
            <person name="Isak A."/>
            <person name="van Brunt A."/>
            <person name="Nguyen C."/>
            <person name="Du F."/>
            <person name="Courtney L."/>
            <person name="Kalicki J."/>
            <person name="Ozersky P."/>
            <person name="Abbott S."/>
            <person name="Armstrong J."/>
            <person name="Belter E.A."/>
            <person name="Caruso L."/>
            <person name="Cedroni M."/>
            <person name="Cotton M."/>
            <person name="Davidson T."/>
            <person name="Desai A."/>
            <person name="Elliott G."/>
            <person name="Erb T."/>
            <person name="Fronick C."/>
            <person name="Gaige T."/>
            <person name="Haakenson W."/>
            <person name="Haglund K."/>
            <person name="Holmes A."/>
            <person name="Harkins R."/>
            <person name="Kim K."/>
            <person name="Kruchowski S.S."/>
            <person name="Strong C.M."/>
            <person name="Grewal N."/>
            <person name="Goyea E."/>
            <person name="Hou S."/>
            <person name="Levy A."/>
            <person name="Martinka S."/>
            <person name="Mead K."/>
            <person name="McLellan M.D."/>
            <person name="Meyer R."/>
            <person name="Randall-Maher J."/>
            <person name="Tomlinson C."/>
            <person name="Dauphin-Kohlberg S."/>
            <person name="Kozlowicz-Reilly A."/>
            <person name="Shah N."/>
            <person name="Swearengen-Shahid S."/>
            <person name="Snider J."/>
            <person name="Strong J.T."/>
            <person name="Thompson J."/>
            <person name="Yoakum M."/>
            <person name="Leonard S."/>
            <person name="Pearman C."/>
            <person name="Trani L."/>
            <person name="Radionenko M."/>
            <person name="Waligorski J.E."/>
            <person name="Wang C."/>
            <person name="Rock S.M."/>
            <person name="Tin-Wollam A.-M."/>
            <person name="Maupin R."/>
            <person name="Latreille P."/>
            <person name="Wendl M.C."/>
            <person name="Yang S.-P."/>
            <person name="Pohl C."/>
            <person name="Wallis J.W."/>
            <person name="Spieth J."/>
            <person name="Bieri T.A."/>
            <person name="Berkowicz N."/>
            <person name="Nelson J.O."/>
            <person name="Osborne J."/>
            <person name="Ding L."/>
            <person name="Meyer R."/>
            <person name="Sabo A."/>
            <person name="Shotland Y."/>
            <person name="Sinha P."/>
            <person name="Wohldmann P.E."/>
            <person name="Cook L.L."/>
            <person name="Hickenbotham M.T."/>
            <person name="Eldred J."/>
            <person name="Williams D."/>
            <person name="Jones T.A."/>
            <person name="She X."/>
            <person name="Ciccarelli F.D."/>
            <person name="Izaurralde E."/>
            <person name="Taylor J."/>
            <person name="Schmutz J."/>
            <person name="Myers R.M."/>
            <person name="Cox D.R."/>
            <person name="Huang X."/>
            <person name="McPherson J.D."/>
            <person name="Mardis E.R."/>
            <person name="Clifton S.W."/>
            <person name="Warren W.C."/>
            <person name="Chinwalla A.T."/>
            <person name="Eddy S.R."/>
            <person name="Marra M.A."/>
            <person name="Ovcharenko I."/>
            <person name="Furey T.S."/>
            <person name="Miller W."/>
            <person name="Eichler E.E."/>
            <person name="Bork P."/>
            <person name="Suyama M."/>
            <person name="Torrents D."/>
            <person name="Waterston R.H."/>
            <person name="Wilson R.K."/>
        </authorList>
    </citation>
    <scope>NUCLEOTIDE SEQUENCE [LARGE SCALE GENOMIC DNA]</scope>
</reference>
<reference key="2">
    <citation type="submission" date="2005-09" db="EMBL/GenBank/DDBJ databases">
        <authorList>
            <person name="Mural R.J."/>
            <person name="Istrail S."/>
            <person name="Sutton G.G."/>
            <person name="Florea L."/>
            <person name="Halpern A.L."/>
            <person name="Mobarry C.M."/>
            <person name="Lippert R."/>
            <person name="Walenz B."/>
            <person name="Shatkay H."/>
            <person name="Dew I."/>
            <person name="Miller J.R."/>
            <person name="Flanigan M.J."/>
            <person name="Edwards N.J."/>
            <person name="Bolanos R."/>
            <person name="Fasulo D."/>
            <person name="Halldorsson B.V."/>
            <person name="Hannenhalli S."/>
            <person name="Turner R."/>
            <person name="Yooseph S."/>
            <person name="Lu F."/>
            <person name="Nusskern D.R."/>
            <person name="Shue B.C."/>
            <person name="Zheng X.H."/>
            <person name="Zhong F."/>
            <person name="Delcher A.L."/>
            <person name="Huson D.H."/>
            <person name="Kravitz S.A."/>
            <person name="Mouchard L."/>
            <person name="Reinert K."/>
            <person name="Remington K.A."/>
            <person name="Clark A.G."/>
            <person name="Waterman M.S."/>
            <person name="Eichler E.E."/>
            <person name="Adams M.D."/>
            <person name="Hunkapiller M.W."/>
            <person name="Myers E.W."/>
            <person name="Venter J.C."/>
        </authorList>
    </citation>
    <scope>NUCLEOTIDE SEQUENCE [LARGE SCALE GENOMIC DNA]</scope>
</reference>
<reference evidence="5" key="3">
    <citation type="journal article" date="2022" name="Proc. Natl. Acad. Sci. U.S.A.">
        <title>SPACA9 is a lumenal protein of human ciliary singlet and doublet microtubules.</title>
        <authorList>
            <person name="Gui M."/>
            <person name="Croft J.T."/>
            <person name="Zabeo D."/>
            <person name="Acharya V."/>
            <person name="Kollman J.M."/>
            <person name="Burgoyne T."/>
            <person name="Hoog J.L."/>
            <person name="Brown A."/>
        </authorList>
    </citation>
    <scope>STRUCTURE BY ELECTRON MICROSCOPY (3.60 ANGSTROMS)</scope>
    <scope>FUNCTION</scope>
    <scope>SUBCELLULAR LOCATION</scope>
    <scope>TISSUE SPECIFICITY</scope>
</reference>
<proteinExistence type="evidence at protein level"/>
<gene>
    <name evidence="4" type="primary">CIMIP2C</name>
    <name type="synonym">C2orf70</name>
    <name type="synonym">FAM166C</name>
</gene>
<name>CMI2C_HUMAN</name>
<organism>
    <name type="scientific">Homo sapiens</name>
    <name type="common">Human</name>
    <dbReference type="NCBI Taxonomy" id="9606"/>
    <lineage>
        <taxon>Eukaryota</taxon>
        <taxon>Metazoa</taxon>
        <taxon>Chordata</taxon>
        <taxon>Craniata</taxon>
        <taxon>Vertebrata</taxon>
        <taxon>Euteleostomi</taxon>
        <taxon>Mammalia</taxon>
        <taxon>Eutheria</taxon>
        <taxon>Euarchontoglires</taxon>
        <taxon>Primates</taxon>
        <taxon>Haplorrhini</taxon>
        <taxon>Catarrhini</taxon>
        <taxon>Hominidae</taxon>
        <taxon>Homo</taxon>
    </lineage>
</organism>
<feature type="chain" id="PRO_0000332277" description="Ciliary microtubule inner protein 2C">
    <location>
        <begin position="1"/>
        <end position="201"/>
    </location>
</feature>
<feature type="sequence variant" id="VAR_042998" description="In dbSNP:rs13002673.">
    <original>Q</original>
    <variation>H</variation>
    <location>
        <position position="66"/>
    </location>
</feature>
<feature type="sequence variant" id="VAR_054056" description="In dbSNP:rs2272466.">
    <original>Q</original>
    <variation>L</variation>
    <location>
        <position position="177"/>
    </location>
</feature>
<evidence type="ECO:0000250" key="1">
    <source>
        <dbReference type="UniProtKB" id="Q9DAS2"/>
    </source>
</evidence>
<evidence type="ECO:0000269" key="2">
    <source>
    </source>
</evidence>
<evidence type="ECO:0000305" key="3"/>
<evidence type="ECO:0000312" key="4">
    <source>
        <dbReference type="HGNC" id="HGNC:27938"/>
    </source>
</evidence>
<evidence type="ECO:0007744" key="5">
    <source>
        <dbReference type="PDB" id="7UNG"/>
    </source>
</evidence>
<keyword id="KW-0002">3D-structure</keyword>
<keyword id="KW-0966">Cell projection</keyword>
<keyword id="KW-0969">Cilium</keyword>
<keyword id="KW-0963">Cytoplasm</keyword>
<keyword id="KW-0206">Cytoskeleton</keyword>
<keyword id="KW-0282">Flagellum</keyword>
<keyword id="KW-1267">Proteomics identification</keyword>
<keyword id="KW-1185">Reference proteome</keyword>